<gene>
    <name type="primary">HST</name>
    <name evidence="4 5 6" type="synonym">HCT</name>
    <name evidence="9" type="ordered locus">At5g48930</name>
    <name evidence="10" type="ORF">K19E20.4</name>
</gene>
<feature type="chain" id="PRO_0000409592" description="Shikimate O-hydroxycinnamoyltransferase">
    <location>
        <begin position="1"/>
        <end position="433"/>
    </location>
</feature>
<feature type="active site" description="Proton acceptor" evidence="8">
    <location>
        <position position="153"/>
    </location>
</feature>
<feature type="active site" description="Proton acceptor" evidence="8">
    <location>
        <position position="380"/>
    </location>
</feature>
<feature type="binding site" evidence="3 11">
    <location>
        <begin position="252"/>
        <end position="255"/>
    </location>
    <ligand>
        <name>4-coumaroyl-CoA</name>
        <dbReference type="ChEBI" id="CHEBI:57355"/>
    </ligand>
</feature>
<feature type="binding site" evidence="3 11">
    <location>
        <begin position="284"/>
        <end position="290"/>
    </location>
    <ligand>
        <name>4-coumaroyl-CoA</name>
        <dbReference type="ChEBI" id="CHEBI:57355"/>
    </ligand>
</feature>
<feature type="binding site" evidence="3 11">
    <location>
        <begin position="370"/>
        <end position="373"/>
    </location>
    <ligand>
        <name>4-coumaroyl-CoA</name>
        <dbReference type="ChEBI" id="CHEBI:57355"/>
    </ligand>
</feature>
<feature type="sequence conflict" description="In Ref. 5; AAM61215." evidence="7" ref="5">
    <original>A</original>
    <variation>T</variation>
    <location>
        <position position="125"/>
    </location>
</feature>
<feature type="strand" evidence="12">
    <location>
        <begin position="4"/>
        <end position="11"/>
    </location>
</feature>
<feature type="strand" evidence="12">
    <location>
        <begin position="20"/>
        <end position="22"/>
    </location>
</feature>
<feature type="helix" evidence="12">
    <location>
        <begin position="26"/>
        <end position="28"/>
    </location>
</feature>
<feature type="strand" evidence="12">
    <location>
        <begin position="36"/>
        <end position="42"/>
    </location>
</feature>
<feature type="turn" evidence="12">
    <location>
        <begin position="48"/>
        <end position="51"/>
    </location>
</feature>
<feature type="helix" evidence="12">
    <location>
        <begin position="53"/>
        <end position="63"/>
    </location>
</feature>
<feature type="turn" evidence="12">
    <location>
        <begin position="64"/>
        <end position="67"/>
    </location>
</feature>
<feature type="helix" evidence="12">
    <location>
        <begin position="68"/>
        <end position="71"/>
    </location>
</feature>
<feature type="strand" evidence="12">
    <location>
        <begin position="73"/>
        <end position="76"/>
    </location>
</feature>
<feature type="strand" evidence="12">
    <location>
        <begin position="82"/>
        <end position="86"/>
    </location>
</feature>
<feature type="strand" evidence="12">
    <location>
        <begin position="91"/>
        <end position="100"/>
    </location>
</feature>
<feature type="helix" evidence="12">
    <location>
        <begin position="102"/>
        <end position="105"/>
    </location>
</feature>
<feature type="turn" evidence="12">
    <location>
        <begin position="106"/>
        <end position="108"/>
    </location>
</feature>
<feature type="helix" evidence="12">
    <location>
        <begin position="112"/>
        <end position="117"/>
    </location>
</feature>
<feature type="strand" evidence="13">
    <location>
        <begin position="127"/>
        <end position="130"/>
    </location>
</feature>
<feature type="strand" evidence="12">
    <location>
        <begin position="132"/>
        <end position="140"/>
    </location>
</feature>
<feature type="strand" evidence="12">
    <location>
        <begin position="145"/>
        <end position="151"/>
    </location>
</feature>
<feature type="turn" evidence="14">
    <location>
        <begin position="153"/>
        <end position="155"/>
    </location>
</feature>
<feature type="helix" evidence="12">
    <location>
        <begin position="158"/>
        <end position="172"/>
    </location>
</feature>
<feature type="helix" evidence="12">
    <location>
        <begin position="185"/>
        <end position="188"/>
    </location>
</feature>
<feature type="helix" evidence="12">
    <location>
        <begin position="201"/>
        <end position="203"/>
    </location>
</feature>
<feature type="strand" evidence="12">
    <location>
        <begin position="215"/>
        <end position="219"/>
    </location>
</feature>
<feature type="helix" evidence="12">
    <location>
        <begin position="220"/>
        <end position="222"/>
    </location>
</feature>
<feature type="strand" evidence="12">
    <location>
        <begin position="223"/>
        <end position="230"/>
    </location>
</feature>
<feature type="helix" evidence="14">
    <location>
        <begin position="232"/>
        <end position="240"/>
    </location>
</feature>
<feature type="helix" evidence="12">
    <location>
        <begin position="244"/>
        <end position="246"/>
    </location>
</feature>
<feature type="helix" evidence="12">
    <location>
        <begin position="253"/>
        <end position="268"/>
    </location>
</feature>
<feature type="strand" evidence="12">
    <location>
        <begin position="276"/>
        <end position="284"/>
    </location>
</feature>
<feature type="turn" evidence="12">
    <location>
        <begin position="286"/>
        <end position="288"/>
    </location>
</feature>
<feature type="strand" evidence="12">
    <location>
        <begin position="289"/>
        <end position="291"/>
    </location>
</feature>
<feature type="strand" evidence="12">
    <location>
        <begin position="302"/>
        <end position="305"/>
    </location>
</feature>
<feature type="strand" evidence="12">
    <location>
        <begin position="308"/>
        <end position="310"/>
    </location>
</feature>
<feature type="helix" evidence="12">
    <location>
        <begin position="311"/>
        <end position="316"/>
    </location>
</feature>
<feature type="helix" evidence="12">
    <location>
        <begin position="319"/>
        <end position="332"/>
    </location>
</feature>
<feature type="helix" evidence="12">
    <location>
        <begin position="335"/>
        <end position="347"/>
    </location>
</feature>
<feature type="helix" evidence="12">
    <location>
        <begin position="351"/>
        <end position="354"/>
    </location>
</feature>
<feature type="strand" evidence="12">
    <location>
        <begin position="358"/>
        <end position="362"/>
    </location>
</feature>
<feature type="strand" evidence="12">
    <location>
        <begin position="366"/>
        <end position="370"/>
    </location>
</feature>
<feature type="strand" evidence="14">
    <location>
        <begin position="381"/>
        <end position="383"/>
    </location>
</feature>
<feature type="strand" evidence="12">
    <location>
        <begin position="387"/>
        <end position="392"/>
    </location>
</feature>
<feature type="strand" evidence="12">
    <location>
        <begin position="399"/>
        <end position="404"/>
    </location>
</feature>
<feature type="strand" evidence="12">
    <location>
        <begin position="412"/>
        <end position="419"/>
    </location>
</feature>
<feature type="helix" evidence="12">
    <location>
        <begin position="420"/>
        <end position="425"/>
    </location>
</feature>
<feature type="helix" evidence="12">
    <location>
        <begin position="426"/>
        <end position="430"/>
    </location>
</feature>
<dbReference type="EC" id="2.3.1.133" evidence="1 3"/>
<dbReference type="EMBL" id="AB017061">
    <property type="protein sequence ID" value="BAB10316.1"/>
    <property type="molecule type" value="Genomic_DNA"/>
</dbReference>
<dbReference type="EMBL" id="CP002688">
    <property type="protein sequence ID" value="AED95744.1"/>
    <property type="molecule type" value="Genomic_DNA"/>
</dbReference>
<dbReference type="EMBL" id="BT026488">
    <property type="protein sequence ID" value="ABH04595.1"/>
    <property type="molecule type" value="mRNA"/>
</dbReference>
<dbReference type="EMBL" id="AK226213">
    <property type="protein sequence ID" value="BAE98378.1"/>
    <property type="molecule type" value="mRNA"/>
</dbReference>
<dbReference type="EMBL" id="AY084652">
    <property type="protein sequence ID" value="AAM61215.1"/>
    <property type="molecule type" value="mRNA"/>
</dbReference>
<dbReference type="RefSeq" id="NP_199704.1">
    <property type="nucleotide sequence ID" value="NM_124270.4"/>
</dbReference>
<dbReference type="PDB" id="5KJS">
    <property type="method" value="X-ray"/>
    <property type="resolution" value="2.20 A"/>
    <property type="chains" value="A=1-433"/>
</dbReference>
<dbReference type="PDB" id="5KJT">
    <property type="method" value="X-ray"/>
    <property type="resolution" value="2.50 A"/>
    <property type="chains" value="A=1-433"/>
</dbReference>
<dbReference type="PDB" id="5KJU">
    <property type="method" value="X-ray"/>
    <property type="resolution" value="2.44 A"/>
    <property type="chains" value="A=1-433"/>
</dbReference>
<dbReference type="PDBsum" id="5KJS"/>
<dbReference type="PDBsum" id="5KJT"/>
<dbReference type="PDBsum" id="5KJU"/>
<dbReference type="SMR" id="Q9FI78"/>
<dbReference type="BioGRID" id="20197">
    <property type="interactions" value="4"/>
</dbReference>
<dbReference type="FunCoup" id="Q9FI78">
    <property type="interactions" value="330"/>
</dbReference>
<dbReference type="IntAct" id="Q9FI78">
    <property type="interactions" value="5"/>
</dbReference>
<dbReference type="STRING" id="3702.Q9FI78"/>
<dbReference type="PaxDb" id="3702-AT5G48930.1"/>
<dbReference type="ProteomicsDB" id="232138"/>
<dbReference type="DNASU" id="834951"/>
<dbReference type="EnsemblPlants" id="AT5G48930.1">
    <property type="protein sequence ID" value="AT5G48930.1"/>
    <property type="gene ID" value="AT5G48930"/>
</dbReference>
<dbReference type="GeneID" id="834951"/>
<dbReference type="Gramene" id="AT5G48930.1">
    <property type="protein sequence ID" value="AT5G48930.1"/>
    <property type="gene ID" value="AT5G48930"/>
</dbReference>
<dbReference type="KEGG" id="ath:AT5G48930"/>
<dbReference type="Araport" id="AT5G48930"/>
<dbReference type="TAIR" id="AT5G48930">
    <property type="gene designation" value="HCT"/>
</dbReference>
<dbReference type="eggNOG" id="ENOG502QTJX">
    <property type="taxonomic scope" value="Eukaryota"/>
</dbReference>
<dbReference type="HOGENOM" id="CLU_014546_2_0_1"/>
<dbReference type="InParanoid" id="Q9FI78"/>
<dbReference type="OMA" id="AIQHTRF"/>
<dbReference type="PhylomeDB" id="Q9FI78"/>
<dbReference type="BioCyc" id="ARA:AT5G48930-MONOMER"/>
<dbReference type="BRENDA" id="2.3.1.133">
    <property type="organism ID" value="399"/>
</dbReference>
<dbReference type="PRO" id="PR:Q9FI78"/>
<dbReference type="Proteomes" id="UP000006548">
    <property type="component" value="Chromosome 5"/>
</dbReference>
<dbReference type="ExpressionAtlas" id="Q9FI78">
    <property type="expression patterns" value="baseline and differential"/>
</dbReference>
<dbReference type="GO" id="GO:0005737">
    <property type="term" value="C:cytoplasm"/>
    <property type="evidence" value="ECO:0000314"/>
    <property type="project" value="TAIR"/>
</dbReference>
<dbReference type="GO" id="GO:0016020">
    <property type="term" value="C:membrane"/>
    <property type="evidence" value="ECO:0000314"/>
    <property type="project" value="TAIR"/>
</dbReference>
<dbReference type="GO" id="GO:0047205">
    <property type="term" value="F:quinate O-hydroxycinnamoyltransferase activity"/>
    <property type="evidence" value="ECO:0000315"/>
    <property type="project" value="TAIR"/>
</dbReference>
<dbReference type="GO" id="GO:0047172">
    <property type="term" value="F:shikimate O-hydroxycinnamoyltransferase activity"/>
    <property type="evidence" value="ECO:0000315"/>
    <property type="project" value="TAIR"/>
</dbReference>
<dbReference type="GO" id="GO:0071555">
    <property type="term" value="P:cell wall organization"/>
    <property type="evidence" value="ECO:0007669"/>
    <property type="project" value="UniProtKB-KW"/>
</dbReference>
<dbReference type="GO" id="GO:0009809">
    <property type="term" value="P:lignin biosynthetic process"/>
    <property type="evidence" value="ECO:0000315"/>
    <property type="project" value="TAIR"/>
</dbReference>
<dbReference type="GO" id="GO:0009963">
    <property type="term" value="P:positive regulation of flavonoid biosynthetic process"/>
    <property type="evidence" value="ECO:0000315"/>
    <property type="project" value="TAIR"/>
</dbReference>
<dbReference type="FunFam" id="3.30.559.10:FF:000015">
    <property type="entry name" value="Spermidine hydroxycinnamoyl transferase"/>
    <property type="match status" value="1"/>
</dbReference>
<dbReference type="FunFam" id="3.30.559.10:FF:000008">
    <property type="entry name" value="Tryptamine hydroxycinnamoyl transferase"/>
    <property type="match status" value="1"/>
</dbReference>
<dbReference type="Gene3D" id="3.30.559.10">
    <property type="entry name" value="Chloramphenicol acetyltransferase-like domain"/>
    <property type="match status" value="2"/>
</dbReference>
<dbReference type="InterPro" id="IPR023213">
    <property type="entry name" value="CAT-like_dom_sf"/>
</dbReference>
<dbReference type="InterPro" id="IPR050317">
    <property type="entry name" value="Plant_Fungal_Acyltransferase"/>
</dbReference>
<dbReference type="PANTHER" id="PTHR31642:SF11">
    <property type="entry name" value="SHIKIMATE O-HYDROXYCINNAMOYLTRANSFERASE"/>
    <property type="match status" value="1"/>
</dbReference>
<dbReference type="PANTHER" id="PTHR31642">
    <property type="entry name" value="TRICHOTHECENE 3-O-ACETYLTRANSFERASE"/>
    <property type="match status" value="1"/>
</dbReference>
<dbReference type="Pfam" id="PF02458">
    <property type="entry name" value="Transferase"/>
    <property type="match status" value="1"/>
</dbReference>
<comment type="function">
    <text evidence="1 2 3">Acyltransferase involved in the biosynthesis of lignin (PubMed:15161961, PubMed:26858288, PubMed:27805809). Accepts caffeoyl-CoA and p-coumaroyl-CoA as substrates and transfers the acyl group on both shikimate and quinate acceptors (PubMed:15161961).</text>
</comment>
<comment type="catalytic activity">
    <reaction evidence="1 3">
        <text>shikimate + 4-coumaroyl-CoA = trans-4-coumaroylshikimate + CoA</text>
        <dbReference type="Rhea" id="RHEA:12124"/>
        <dbReference type="ChEBI" id="CHEBI:36208"/>
        <dbReference type="ChEBI" id="CHEBI:57287"/>
        <dbReference type="ChEBI" id="CHEBI:57355"/>
        <dbReference type="ChEBI" id="CHEBI:57768"/>
        <dbReference type="EC" id="2.3.1.133"/>
    </reaction>
</comment>
<comment type="similarity">
    <text evidence="7">Belongs to the plant acyltransferase family.</text>
</comment>
<keyword id="KW-0002">3D-structure</keyword>
<keyword id="KW-0012">Acyltransferase</keyword>
<keyword id="KW-0961">Cell wall biogenesis/degradation</keyword>
<keyword id="KW-1185">Reference proteome</keyword>
<keyword id="KW-0808">Transferase</keyword>
<proteinExistence type="evidence at protein level"/>
<sequence length="433" mass="47975">MKINIRDSTMVRPATETPITNLWNSNVDLVIPRFHTPSVYFYRPTGASNFFDPQVMKEALSKALVPFYPMAGRLKRDDDGRIEIDCNGAGVLFVVADTPSVIDDFGDFAPTLNLRQLIPEVDHSAGIHSFPLLVLQVTFFKCGGASLGVGMQHHAADGFSGLHFINTWSDMARGLDLTIPPFIDRTLLRARDPPQPAFHHVEYQPAPSMKIPLDPSKSGPENTTVSIFKLTRDQLVALKAKSKEDGNTVSYSSYEMLAGHVWRSVGKARGLPNDQETKLYIATDGRSRLRPQLPPGYFGNVIFTATPLAVAGDLLSKPTWYAAGQIHDFLVRMDDNYLRSALDYLEMQPDLSALVRGAHTYKCPNLGITSWVRLPIYDADFGWGRPIFMGPGGIPYEGLSFVLPSPTNDGSLSVAIALQSEHMKLFEKFLFEI</sequence>
<name>HST_ARATH</name>
<protein>
    <recommendedName>
        <fullName evidence="4">Shikimate O-hydroxycinnamoyltransferase</fullName>
        <ecNumber evidence="1 3">2.3.1.133</ecNumber>
    </recommendedName>
    <alternativeName>
        <fullName evidence="4 5">Hydroxycinnamoyl transferase</fullName>
        <shortName evidence="5">AtHCT</shortName>
    </alternativeName>
    <alternativeName>
        <fullName evidence="4">Hydroxycinnamoyl-Coenzyme A shikimate/quinate hydroxycinnamoyltransferase</fullName>
    </alternativeName>
</protein>
<accession>Q9FI78</accession>
<accession>Q8LFT5</accession>
<reference key="1">
    <citation type="journal article" date="1999" name="DNA Res.">
        <title>Structural analysis of Arabidopsis thaliana chromosome 5. IX. Sequence features of the regions of 1,011,550 bp covered by seventeen P1 and TAC clones.</title>
        <authorList>
            <person name="Kaneko T."/>
            <person name="Katoh T."/>
            <person name="Sato S."/>
            <person name="Nakamura Y."/>
            <person name="Asamizu E."/>
            <person name="Kotani H."/>
            <person name="Miyajima N."/>
            <person name="Tabata S."/>
        </authorList>
    </citation>
    <scope>NUCLEOTIDE SEQUENCE [LARGE SCALE GENOMIC DNA]</scope>
    <source>
        <strain>cv. Columbia</strain>
    </source>
</reference>
<reference key="2">
    <citation type="journal article" date="2017" name="Plant J.">
        <title>Araport11: a complete reannotation of the Arabidopsis thaliana reference genome.</title>
        <authorList>
            <person name="Cheng C.Y."/>
            <person name="Krishnakumar V."/>
            <person name="Chan A.P."/>
            <person name="Thibaud-Nissen F."/>
            <person name="Schobel S."/>
            <person name="Town C.D."/>
        </authorList>
    </citation>
    <scope>GENOME REANNOTATION</scope>
    <source>
        <strain>cv. Columbia</strain>
    </source>
</reference>
<reference key="3">
    <citation type="submission" date="2006-08" db="EMBL/GenBank/DDBJ databases">
        <title>Arabidopsis ORF Clones.</title>
        <authorList>
            <person name="Quinitio C."/>
            <person name="Chen H."/>
            <person name="Kim C.J."/>
            <person name="Shinn P."/>
            <person name="Ecker J.R."/>
        </authorList>
    </citation>
    <scope>NUCLEOTIDE SEQUENCE [LARGE SCALE MRNA]</scope>
    <source>
        <strain>cv. Columbia</strain>
    </source>
</reference>
<reference key="4">
    <citation type="submission" date="2006-07" db="EMBL/GenBank/DDBJ databases">
        <title>Large-scale analysis of RIKEN Arabidopsis full-length (RAFL) cDNAs.</title>
        <authorList>
            <person name="Totoki Y."/>
            <person name="Seki M."/>
            <person name="Ishida J."/>
            <person name="Nakajima M."/>
            <person name="Enju A."/>
            <person name="Kamiya A."/>
            <person name="Narusaka M."/>
            <person name="Shin-i T."/>
            <person name="Nakagawa M."/>
            <person name="Sakamoto N."/>
            <person name="Oishi K."/>
            <person name="Kohara Y."/>
            <person name="Kobayashi M."/>
            <person name="Toyoda A."/>
            <person name="Sakaki Y."/>
            <person name="Sakurai T."/>
            <person name="Iida K."/>
            <person name="Akiyama K."/>
            <person name="Satou M."/>
            <person name="Toyoda T."/>
            <person name="Konagaya A."/>
            <person name="Carninci P."/>
            <person name="Kawai J."/>
            <person name="Hayashizaki Y."/>
            <person name="Shinozaki K."/>
        </authorList>
    </citation>
    <scope>NUCLEOTIDE SEQUENCE [LARGE SCALE MRNA]</scope>
    <source>
        <strain>cv. Columbia</strain>
    </source>
</reference>
<reference key="5">
    <citation type="submission" date="2002-03" db="EMBL/GenBank/DDBJ databases">
        <title>Full-length cDNA from Arabidopsis thaliana.</title>
        <authorList>
            <person name="Brover V.V."/>
            <person name="Troukhan M.E."/>
            <person name="Alexandrov N.A."/>
            <person name="Lu Y.-P."/>
            <person name="Flavell R.B."/>
            <person name="Feldmann K.A."/>
        </authorList>
    </citation>
    <scope>NUCLEOTIDE SEQUENCE [LARGE SCALE MRNA]</scope>
</reference>
<reference key="6">
    <citation type="journal article" date="2004" name="Plant Cell">
        <title>Silencing of hydroxycinnamoyl-coenzyme A shikimate/quinate hydroxycinnamoyltransferase affects phenylpropanoid biosynthesis.</title>
        <authorList>
            <person name="Hoffmann L."/>
            <person name="Besseau S."/>
            <person name="Geoffroy P."/>
            <person name="Ritzenthaler C."/>
            <person name="Meyer D."/>
            <person name="Lapierre C."/>
            <person name="Pollet B."/>
            <person name="Legrand M."/>
        </authorList>
    </citation>
    <scope>FUNCTION</scope>
    <scope>CATALYTIC ACTIVITY</scope>
</reference>
<reference key="7">
    <citation type="journal article" date="2016" name="Plant Cell Physiol.">
        <title>Exploiting the substrate promiscuity of hydroxycinnamoyl-CoA:shikimate hydroxycinnamoyl transferase to reduce lignin.</title>
        <authorList>
            <person name="Eudes A."/>
            <person name="Pereira J.H."/>
            <person name="Yogiswara S."/>
            <person name="Wang G."/>
            <person name="Teixeira Benites V."/>
            <person name="Baidoo E.E.K."/>
            <person name="Lee T.S."/>
            <person name="Adams P.D."/>
            <person name="Keasling J.D."/>
            <person name="Loque D."/>
        </authorList>
    </citation>
    <scope>FUNCTION</scope>
    <source>
        <strain>cv. Columbia</strain>
    </source>
</reference>
<reference key="8">
    <citation type="journal article" date="2016" name="Biochemistry">
        <title>Dynamic conformational states dictate selectivity toward the native substrate in a substrate-permissive acyltransferase.</title>
        <authorList>
            <person name="Levsh O."/>
            <person name="Chiang Y.-C."/>
            <person name="Tung C.F."/>
            <person name="Noel J.P."/>
            <person name="Wang Y."/>
            <person name="Weng J.-K."/>
        </authorList>
    </citation>
    <scope>X-RAY CRYSTALLOGRAPHY (2.20 ANGSTROMS) IN COMPLEX WITH 4-COUMAROYL-COA</scope>
    <scope>ACTIVE SITES</scope>
    <scope>FUNCTION</scope>
    <scope>CATALYTIC ACTIVITY</scope>
</reference>
<organism>
    <name type="scientific">Arabidopsis thaliana</name>
    <name type="common">Mouse-ear cress</name>
    <dbReference type="NCBI Taxonomy" id="3702"/>
    <lineage>
        <taxon>Eukaryota</taxon>
        <taxon>Viridiplantae</taxon>
        <taxon>Streptophyta</taxon>
        <taxon>Embryophyta</taxon>
        <taxon>Tracheophyta</taxon>
        <taxon>Spermatophyta</taxon>
        <taxon>Magnoliopsida</taxon>
        <taxon>eudicotyledons</taxon>
        <taxon>Gunneridae</taxon>
        <taxon>Pentapetalae</taxon>
        <taxon>rosids</taxon>
        <taxon>malvids</taxon>
        <taxon>Brassicales</taxon>
        <taxon>Brassicaceae</taxon>
        <taxon>Camelineae</taxon>
        <taxon>Arabidopsis</taxon>
    </lineage>
</organism>
<evidence type="ECO:0000269" key="1">
    <source>
    </source>
</evidence>
<evidence type="ECO:0000269" key="2">
    <source>
    </source>
</evidence>
<evidence type="ECO:0000269" key="3">
    <source>
    </source>
</evidence>
<evidence type="ECO:0000303" key="4">
    <source>
    </source>
</evidence>
<evidence type="ECO:0000303" key="5">
    <source>
    </source>
</evidence>
<evidence type="ECO:0000303" key="6">
    <source>
    </source>
</evidence>
<evidence type="ECO:0000305" key="7"/>
<evidence type="ECO:0000305" key="8">
    <source>
    </source>
</evidence>
<evidence type="ECO:0000312" key="9">
    <source>
        <dbReference type="Araport" id="AT5G48930"/>
    </source>
</evidence>
<evidence type="ECO:0000312" key="10">
    <source>
        <dbReference type="EMBL" id="BAB10316.1"/>
    </source>
</evidence>
<evidence type="ECO:0007744" key="11">
    <source>
        <dbReference type="PDB" id="5KJT"/>
    </source>
</evidence>
<evidence type="ECO:0007829" key="12">
    <source>
        <dbReference type="PDB" id="5KJS"/>
    </source>
</evidence>
<evidence type="ECO:0007829" key="13">
    <source>
        <dbReference type="PDB" id="5KJT"/>
    </source>
</evidence>
<evidence type="ECO:0007829" key="14">
    <source>
        <dbReference type="PDB" id="5KJU"/>
    </source>
</evidence>